<reference key="1">
    <citation type="submission" date="2007-11" db="EMBL/GenBank/DDBJ databases">
        <title>NISC comparative sequencing initiative.</title>
        <authorList>
            <person name="Antonellis A."/>
            <person name="Benjamin B."/>
            <person name="Blakesley R.W."/>
            <person name="Bouffard G.G."/>
            <person name="Brinkley C."/>
            <person name="Brooks S."/>
            <person name="Chu G."/>
            <person name="Chub I."/>
            <person name="Coleman H."/>
            <person name="Fuksenko T."/>
            <person name="Gestole M."/>
            <person name="Gregory M."/>
            <person name="Guan X."/>
            <person name="Gupta J."/>
            <person name="Gurson N."/>
            <person name="Han E."/>
            <person name="Han J."/>
            <person name="Hansen N."/>
            <person name="Hargrove A."/>
            <person name="Hines-Harris K."/>
            <person name="Ho S.-L."/>
            <person name="Hu P."/>
            <person name="Hunter G."/>
            <person name="Hurle B."/>
            <person name="Idol J.R."/>
            <person name="Johnson T."/>
            <person name="Knight E."/>
            <person name="Kwong P."/>
            <person name="Lee-Lin S.-Q."/>
            <person name="Legaspi R."/>
            <person name="Madden M."/>
            <person name="Maduro Q.L."/>
            <person name="Maduro V.B."/>
            <person name="Margulies E.H."/>
            <person name="Masiello C."/>
            <person name="Maskeri B."/>
            <person name="McDowell J."/>
            <person name="Merkulov G."/>
            <person name="Montemayor C."/>
            <person name="Mullikin J.C."/>
            <person name="Park M."/>
            <person name="Prasad A."/>
            <person name="Ramsahoye C."/>
            <person name="Reddix-Dugue N."/>
            <person name="Riebow N."/>
            <person name="Schandler K."/>
            <person name="Schueler M.G."/>
            <person name="Sison C."/>
            <person name="Smith L."/>
            <person name="Stantripop S."/>
            <person name="Thomas J.W."/>
            <person name="Thomas P.J."/>
            <person name="Tsipouri V."/>
            <person name="Young A."/>
            <person name="Green E.D."/>
        </authorList>
    </citation>
    <scope>NUCLEOTIDE SEQUENCE [LARGE SCALE GENOMIC DNA]</scope>
</reference>
<reference key="2">
    <citation type="journal article" date="2000" name="Mol. Biol. Evol.">
        <title>Strand symmetry around the beta-globin origin of replication in primates.</title>
        <authorList>
            <person name="Francino M.P."/>
            <person name="Ochman H."/>
        </authorList>
    </citation>
    <scope>NUCLEOTIDE SEQUENCE [GENOMIC DNA] OF 107-147</scope>
    <source>
        <tissue>Blood</tissue>
    </source>
</reference>
<keyword id="KW-0007">Acetylation</keyword>
<keyword id="KW-0349">Heme</keyword>
<keyword id="KW-0408">Iron</keyword>
<keyword id="KW-0479">Metal-binding</keyword>
<keyword id="KW-0561">Oxygen transport</keyword>
<keyword id="KW-0597">Phosphoprotein</keyword>
<keyword id="KW-1185">Reference proteome</keyword>
<keyword id="KW-0702">S-nitrosylation</keyword>
<keyword id="KW-0813">Transport</keyword>
<organism>
    <name type="scientific">Papio anubis</name>
    <name type="common">Olive baboon</name>
    <dbReference type="NCBI Taxonomy" id="9555"/>
    <lineage>
        <taxon>Eukaryota</taxon>
        <taxon>Metazoa</taxon>
        <taxon>Chordata</taxon>
        <taxon>Craniata</taxon>
        <taxon>Vertebrata</taxon>
        <taxon>Euteleostomi</taxon>
        <taxon>Mammalia</taxon>
        <taxon>Eutheria</taxon>
        <taxon>Euarchontoglires</taxon>
        <taxon>Primates</taxon>
        <taxon>Haplorrhini</taxon>
        <taxon>Catarrhini</taxon>
        <taxon>Cercopithecidae</taxon>
        <taxon>Cercopithecinae</taxon>
        <taxon>Papio</taxon>
    </lineage>
</organism>
<name>HBB_PAPAN</name>
<accession>Q9TSP1</accession>
<accession>A9L8X7</accession>
<comment type="function">
    <text>Involved in oxygen transport from the lung to the various peripheral tissues.</text>
</comment>
<comment type="subunit">
    <text>Heterotetramer of two alpha chains and two beta chains.</text>
</comment>
<comment type="tissue specificity">
    <text>Red blood cells.</text>
</comment>
<comment type="similarity">
    <text evidence="3">Belongs to the globin family.</text>
</comment>
<evidence type="ECO:0000250" key="1">
    <source>
        <dbReference type="UniProtKB" id="P02086"/>
    </source>
</evidence>
<evidence type="ECO:0000250" key="2">
    <source>
        <dbReference type="UniProtKB" id="P68871"/>
    </source>
</evidence>
<evidence type="ECO:0000255" key="3">
    <source>
        <dbReference type="PROSITE-ProRule" id="PRU00238"/>
    </source>
</evidence>
<dbReference type="EMBL" id="DP000505">
    <property type="protein sequence ID" value="ABX52138.1"/>
    <property type="molecule type" value="Genomic_DNA"/>
</dbReference>
<dbReference type="EMBL" id="AF205411">
    <property type="protein sequence ID" value="AAF23762.1"/>
    <property type="molecule type" value="Genomic_DNA"/>
</dbReference>
<dbReference type="RefSeq" id="NP_001162318.1">
    <property type="nucleotide sequence ID" value="NM_001168847.1"/>
</dbReference>
<dbReference type="SMR" id="Q9TSP1"/>
<dbReference type="STRING" id="9555.ENSPANP00000028693"/>
<dbReference type="Ensembl" id="ENSPANT00000050475.2">
    <property type="protein sequence ID" value="ENSPANP00000028693.1"/>
    <property type="gene ID" value="ENSPANG00000030004.2"/>
</dbReference>
<dbReference type="GeneID" id="100137310"/>
<dbReference type="KEGG" id="panu:100137310"/>
<dbReference type="CTD" id="3043"/>
<dbReference type="eggNOG" id="KOG3378">
    <property type="taxonomic scope" value="Eukaryota"/>
</dbReference>
<dbReference type="GeneTree" id="ENSGT00940000163476"/>
<dbReference type="HOGENOM" id="CLU_003827_10_0_1"/>
<dbReference type="OrthoDB" id="2134at314294"/>
<dbReference type="Proteomes" id="UP000028761">
    <property type="component" value="Chromosome 12"/>
</dbReference>
<dbReference type="Bgee" id="ENSPANG00000034492">
    <property type="expression patterns" value="Expressed in bone marrow and 68 other cell types or tissues"/>
</dbReference>
<dbReference type="GO" id="GO:0072562">
    <property type="term" value="C:blood microparticle"/>
    <property type="evidence" value="ECO:0007669"/>
    <property type="project" value="TreeGrafter"/>
</dbReference>
<dbReference type="GO" id="GO:0031838">
    <property type="term" value="C:haptoglobin-hemoglobin complex"/>
    <property type="evidence" value="ECO:0007669"/>
    <property type="project" value="TreeGrafter"/>
</dbReference>
<dbReference type="GO" id="GO:0005833">
    <property type="term" value="C:hemoglobin complex"/>
    <property type="evidence" value="ECO:0007669"/>
    <property type="project" value="InterPro"/>
</dbReference>
<dbReference type="GO" id="GO:0031720">
    <property type="term" value="F:haptoglobin binding"/>
    <property type="evidence" value="ECO:0007669"/>
    <property type="project" value="TreeGrafter"/>
</dbReference>
<dbReference type="GO" id="GO:0020037">
    <property type="term" value="F:heme binding"/>
    <property type="evidence" value="ECO:0007669"/>
    <property type="project" value="InterPro"/>
</dbReference>
<dbReference type="GO" id="GO:0031721">
    <property type="term" value="F:hemoglobin alpha binding"/>
    <property type="evidence" value="ECO:0007669"/>
    <property type="project" value="TreeGrafter"/>
</dbReference>
<dbReference type="GO" id="GO:0046872">
    <property type="term" value="F:metal ion binding"/>
    <property type="evidence" value="ECO:0007669"/>
    <property type="project" value="UniProtKB-KW"/>
</dbReference>
<dbReference type="GO" id="GO:0043177">
    <property type="term" value="F:organic acid binding"/>
    <property type="evidence" value="ECO:0007669"/>
    <property type="project" value="TreeGrafter"/>
</dbReference>
<dbReference type="GO" id="GO:0019825">
    <property type="term" value="F:oxygen binding"/>
    <property type="evidence" value="ECO:0007669"/>
    <property type="project" value="InterPro"/>
</dbReference>
<dbReference type="GO" id="GO:0005344">
    <property type="term" value="F:oxygen carrier activity"/>
    <property type="evidence" value="ECO:0007669"/>
    <property type="project" value="UniProtKB-KW"/>
</dbReference>
<dbReference type="GO" id="GO:0004601">
    <property type="term" value="F:peroxidase activity"/>
    <property type="evidence" value="ECO:0007669"/>
    <property type="project" value="TreeGrafter"/>
</dbReference>
<dbReference type="GO" id="GO:0042744">
    <property type="term" value="P:hydrogen peroxide catabolic process"/>
    <property type="evidence" value="ECO:0007669"/>
    <property type="project" value="TreeGrafter"/>
</dbReference>
<dbReference type="CDD" id="cd08925">
    <property type="entry name" value="Hb-beta-like"/>
    <property type="match status" value="1"/>
</dbReference>
<dbReference type="FunFam" id="1.10.490.10:FF:000001">
    <property type="entry name" value="Hemoglobin subunit beta"/>
    <property type="match status" value="1"/>
</dbReference>
<dbReference type="Gene3D" id="1.10.490.10">
    <property type="entry name" value="Globins"/>
    <property type="match status" value="1"/>
</dbReference>
<dbReference type="InterPro" id="IPR000971">
    <property type="entry name" value="Globin"/>
</dbReference>
<dbReference type="InterPro" id="IPR009050">
    <property type="entry name" value="Globin-like_sf"/>
</dbReference>
<dbReference type="InterPro" id="IPR012292">
    <property type="entry name" value="Globin/Proto"/>
</dbReference>
<dbReference type="InterPro" id="IPR002337">
    <property type="entry name" value="Hemoglobin_b"/>
</dbReference>
<dbReference type="InterPro" id="IPR050056">
    <property type="entry name" value="Hemoglobin_oxygen_transport"/>
</dbReference>
<dbReference type="PANTHER" id="PTHR11442">
    <property type="entry name" value="HEMOGLOBIN FAMILY MEMBER"/>
    <property type="match status" value="1"/>
</dbReference>
<dbReference type="PANTHER" id="PTHR11442:SF42">
    <property type="entry name" value="HEMOGLOBIN SUBUNIT BETA"/>
    <property type="match status" value="1"/>
</dbReference>
<dbReference type="Pfam" id="PF00042">
    <property type="entry name" value="Globin"/>
    <property type="match status" value="1"/>
</dbReference>
<dbReference type="PRINTS" id="PR00814">
    <property type="entry name" value="BETAHAEM"/>
</dbReference>
<dbReference type="SUPFAM" id="SSF46458">
    <property type="entry name" value="Globin-like"/>
    <property type="match status" value="1"/>
</dbReference>
<dbReference type="PROSITE" id="PS01033">
    <property type="entry name" value="GLOBIN"/>
    <property type="match status" value="1"/>
</dbReference>
<gene>
    <name type="primary">HBB</name>
</gene>
<feature type="initiator methionine" description="Removed" evidence="1">
    <location>
        <position position="1"/>
    </location>
</feature>
<feature type="chain" id="PRO_0000053063" description="Hemoglobin subunit beta">
    <location>
        <begin position="2"/>
        <end position="147"/>
    </location>
</feature>
<feature type="domain" description="Globin" evidence="3">
    <location>
        <begin position="3"/>
        <end position="147"/>
    </location>
</feature>
<feature type="binding site" description="distal binding residue">
    <location>
        <position position="64"/>
    </location>
    <ligand>
        <name>heme b</name>
        <dbReference type="ChEBI" id="CHEBI:60344"/>
    </ligand>
    <ligandPart>
        <name>Fe</name>
        <dbReference type="ChEBI" id="CHEBI:18248"/>
    </ligandPart>
</feature>
<feature type="binding site" description="proximal binding residue">
    <location>
        <position position="93"/>
    </location>
    <ligand>
        <name>heme b</name>
        <dbReference type="ChEBI" id="CHEBI:60344"/>
    </ligand>
    <ligandPart>
        <name>Fe</name>
        <dbReference type="ChEBI" id="CHEBI:18248"/>
    </ligandPart>
</feature>
<feature type="modified residue" description="N-acetylvaline" evidence="1">
    <location>
        <position position="2"/>
    </location>
</feature>
<feature type="modified residue" description="Phosphothreonine" evidence="2">
    <location>
        <position position="13"/>
    </location>
</feature>
<feature type="modified residue" description="Phosphoserine" evidence="2">
    <location>
        <position position="45"/>
    </location>
</feature>
<feature type="modified residue" description="N6-acetyllysine" evidence="2">
    <location>
        <position position="60"/>
    </location>
</feature>
<feature type="modified residue" description="N6-acetyllysine" evidence="2">
    <location>
        <position position="83"/>
    </location>
</feature>
<feature type="modified residue" description="S-nitrosocysteine" evidence="2">
    <location>
        <position position="94"/>
    </location>
</feature>
<feature type="modified residue" description="N6-acetyllysine" evidence="2">
    <location>
        <position position="145"/>
    </location>
</feature>
<protein>
    <recommendedName>
        <fullName>Hemoglobin subunit beta</fullName>
    </recommendedName>
    <alternativeName>
        <fullName>Beta-globin</fullName>
    </alternativeName>
    <alternativeName>
        <fullName>Hemoglobin beta chain</fullName>
    </alternativeName>
</protein>
<sequence>MVHLTPEEKNAVTALWGKVNVDEVGGEALGRLLVVYPWTQRFFDSFGDLSSPAAVMGNPKVKAHGKKVLGAFSDGLNHLDNLKGTFAQLSELHCDKLHVDPENFKLLGNVLVCVLAHHFGKEFTPQVQAAYQKVVAGVANALAHKYH</sequence>
<proteinExistence type="evidence at transcript level"/>